<sequence>MMAVKKSRKRTAATELKKPRRNQLEALGVTTIDYKDVAVLRTFLSERGKIRSRHVTGLTPQQQRQVATAIKNAREMALLPMAGPR</sequence>
<reference key="1">
    <citation type="submission" date="2006-10" db="EMBL/GenBank/DDBJ databases">
        <authorList>
            <person name="Fleischmann R.D."/>
            <person name="Dodson R.J."/>
            <person name="Haft D.H."/>
            <person name="Merkel J.S."/>
            <person name="Nelson W.C."/>
            <person name="Fraser C.M."/>
        </authorList>
    </citation>
    <scope>NUCLEOTIDE SEQUENCE [LARGE SCALE GENOMIC DNA]</scope>
    <source>
        <strain>ATCC 700084 / mc(2)155</strain>
    </source>
</reference>
<reference key="2">
    <citation type="journal article" date="2007" name="Genome Biol.">
        <title>Interrupted coding sequences in Mycobacterium smegmatis: authentic mutations or sequencing errors?</title>
        <authorList>
            <person name="Deshayes C."/>
            <person name="Perrodou E."/>
            <person name="Gallien S."/>
            <person name="Euphrasie D."/>
            <person name="Schaeffer C."/>
            <person name="Van-Dorsselaer A."/>
            <person name="Poch O."/>
            <person name="Lecompte O."/>
            <person name="Reyrat J.-M."/>
        </authorList>
    </citation>
    <scope>NUCLEOTIDE SEQUENCE [LARGE SCALE GENOMIC DNA]</scope>
    <source>
        <strain>ATCC 700084 / mc(2)155</strain>
    </source>
</reference>
<reference key="3">
    <citation type="journal article" date="2009" name="Genome Res.">
        <title>Ortho-proteogenomics: multiple proteomes investigation through orthology and a new MS-based protocol.</title>
        <authorList>
            <person name="Gallien S."/>
            <person name="Perrodou E."/>
            <person name="Carapito C."/>
            <person name="Deshayes C."/>
            <person name="Reyrat J.-M."/>
            <person name="Van Dorsselaer A."/>
            <person name="Poch O."/>
            <person name="Schaeffer C."/>
            <person name="Lecompte O."/>
        </authorList>
    </citation>
    <scope>IDENTIFICATION BY MASS SPECTROMETRY [LARGE SCALE ANALYSIS]</scope>
    <source>
        <strain>ATCC 700084 / mc(2)155</strain>
    </source>
</reference>
<accession>A0R549</accession>
<accession>I7FTZ3</accession>
<organism>
    <name type="scientific">Mycolicibacterium smegmatis (strain ATCC 700084 / mc(2)155)</name>
    <name type="common">Mycobacterium smegmatis</name>
    <dbReference type="NCBI Taxonomy" id="246196"/>
    <lineage>
        <taxon>Bacteria</taxon>
        <taxon>Bacillati</taxon>
        <taxon>Actinomycetota</taxon>
        <taxon>Actinomycetes</taxon>
        <taxon>Mycobacteriales</taxon>
        <taxon>Mycobacteriaceae</taxon>
        <taxon>Mycolicibacterium</taxon>
    </lineage>
</organism>
<gene>
    <name evidence="1" type="primary">rpsR1</name>
    <name type="synonym">rpsR2</name>
    <name type="ordered locus">MSMEG_6065</name>
    <name type="ordered locus">MSMEI_5905</name>
</gene>
<keyword id="KW-0002">3D-structure</keyword>
<keyword id="KW-1185">Reference proteome</keyword>
<keyword id="KW-0687">Ribonucleoprotein</keyword>
<keyword id="KW-0689">Ribosomal protein</keyword>
<keyword id="KW-0694">RNA-binding</keyword>
<keyword id="KW-0699">rRNA-binding</keyword>
<proteinExistence type="evidence at protein level"/>
<protein>
    <recommendedName>
        <fullName evidence="1">Small ribosomal subunit protein bS18A</fullName>
    </recommendedName>
    <alternativeName>
        <fullName evidence="2">30S ribosomal protein S18 1</fullName>
    </alternativeName>
</protein>
<comment type="function">
    <text evidence="1">Binds as a heterodimer with protein bS6 to the central domain of the 16S rRNA, where it helps stabilize the platform of the 30S subunit.</text>
</comment>
<comment type="subunit">
    <text evidence="1">Part of the 30S ribosomal subunit. Forms a tight heterodimer with protein bS6.</text>
</comment>
<comment type="similarity">
    <text evidence="1">Belongs to the bacterial ribosomal protein bS18 family.</text>
</comment>
<comment type="sequence caution" evidence="2">
    <conflict type="erroneous initiation">
        <sequence resource="EMBL-CDS" id="AFP42338"/>
    </conflict>
    <text>Truncated N-terminus.</text>
</comment>
<feature type="chain" id="PRO_0000345505" description="Small ribosomal subunit protein bS18A">
    <location>
        <begin position="1"/>
        <end position="85"/>
    </location>
</feature>
<name>RS181_MYCS2</name>
<evidence type="ECO:0000255" key="1">
    <source>
        <dbReference type="HAMAP-Rule" id="MF_00270"/>
    </source>
</evidence>
<evidence type="ECO:0000305" key="2"/>
<dbReference type="EMBL" id="CP000480">
    <property type="protein sequence ID" value="ABK71162.1"/>
    <property type="molecule type" value="Genomic_DNA"/>
</dbReference>
<dbReference type="EMBL" id="CP001663">
    <property type="protein sequence ID" value="AFP42338.1"/>
    <property type="status" value="ALT_INIT"/>
    <property type="molecule type" value="Genomic_DNA"/>
</dbReference>
<dbReference type="RefSeq" id="YP_890287.1">
    <property type="nucleotide sequence ID" value="NC_008596.1"/>
</dbReference>
<dbReference type="PDB" id="6DZI">
    <property type="method" value="EM"/>
    <property type="resolution" value="3.46 A"/>
    <property type="chains" value="r=1-84"/>
</dbReference>
<dbReference type="PDB" id="6DZK">
    <property type="method" value="EM"/>
    <property type="resolution" value="3.60 A"/>
    <property type="chains" value="r=1-85"/>
</dbReference>
<dbReference type="PDB" id="8FR8">
    <property type="method" value="EM"/>
    <property type="resolution" value="2.76 A"/>
    <property type="chains" value="o=1-84"/>
</dbReference>
<dbReference type="PDBsum" id="6DZI"/>
<dbReference type="PDBsum" id="6DZK"/>
<dbReference type="PDBsum" id="8FR8"/>
<dbReference type="EMDB" id="EMD-29397"/>
<dbReference type="EMDB" id="EMD-8932"/>
<dbReference type="EMDB" id="EMD-8934"/>
<dbReference type="SMR" id="A0R549"/>
<dbReference type="STRING" id="246196.MSMEG_6065"/>
<dbReference type="PaxDb" id="246196-MSMEI_5905"/>
<dbReference type="KEGG" id="msg:MSMEI_5905"/>
<dbReference type="KEGG" id="msm:MSMEG_6065"/>
<dbReference type="PATRIC" id="fig|246196.19.peg.5903"/>
<dbReference type="eggNOG" id="COG0238">
    <property type="taxonomic scope" value="Bacteria"/>
</dbReference>
<dbReference type="OrthoDB" id="9812008at2"/>
<dbReference type="Proteomes" id="UP000000757">
    <property type="component" value="Chromosome"/>
</dbReference>
<dbReference type="Proteomes" id="UP000006158">
    <property type="component" value="Chromosome"/>
</dbReference>
<dbReference type="GO" id="GO:0022627">
    <property type="term" value="C:cytosolic small ribosomal subunit"/>
    <property type="evidence" value="ECO:0007669"/>
    <property type="project" value="TreeGrafter"/>
</dbReference>
<dbReference type="GO" id="GO:0070181">
    <property type="term" value="F:small ribosomal subunit rRNA binding"/>
    <property type="evidence" value="ECO:0007669"/>
    <property type="project" value="TreeGrafter"/>
</dbReference>
<dbReference type="GO" id="GO:0003735">
    <property type="term" value="F:structural constituent of ribosome"/>
    <property type="evidence" value="ECO:0007669"/>
    <property type="project" value="InterPro"/>
</dbReference>
<dbReference type="GO" id="GO:0006412">
    <property type="term" value="P:translation"/>
    <property type="evidence" value="ECO:0007669"/>
    <property type="project" value="UniProtKB-UniRule"/>
</dbReference>
<dbReference type="Gene3D" id="4.10.640.10">
    <property type="entry name" value="Ribosomal protein S18"/>
    <property type="match status" value="1"/>
</dbReference>
<dbReference type="HAMAP" id="MF_00270">
    <property type="entry name" value="Ribosomal_bS18"/>
    <property type="match status" value="1"/>
</dbReference>
<dbReference type="InterPro" id="IPR001648">
    <property type="entry name" value="Ribosomal_bS18"/>
</dbReference>
<dbReference type="InterPro" id="IPR018275">
    <property type="entry name" value="Ribosomal_bS18_CS"/>
</dbReference>
<dbReference type="InterPro" id="IPR036870">
    <property type="entry name" value="Ribosomal_bS18_sf"/>
</dbReference>
<dbReference type="NCBIfam" id="TIGR00165">
    <property type="entry name" value="S18"/>
    <property type="match status" value="1"/>
</dbReference>
<dbReference type="PANTHER" id="PTHR13479">
    <property type="entry name" value="30S RIBOSOMAL PROTEIN S18"/>
    <property type="match status" value="1"/>
</dbReference>
<dbReference type="PANTHER" id="PTHR13479:SF40">
    <property type="entry name" value="SMALL RIBOSOMAL SUBUNIT PROTEIN BS18M"/>
    <property type="match status" value="1"/>
</dbReference>
<dbReference type="Pfam" id="PF01084">
    <property type="entry name" value="Ribosomal_S18"/>
    <property type="match status" value="1"/>
</dbReference>
<dbReference type="PRINTS" id="PR00974">
    <property type="entry name" value="RIBOSOMALS18"/>
</dbReference>
<dbReference type="SUPFAM" id="SSF46911">
    <property type="entry name" value="Ribosomal protein S18"/>
    <property type="match status" value="1"/>
</dbReference>
<dbReference type="PROSITE" id="PS00057">
    <property type="entry name" value="RIBOSOMAL_S18"/>
    <property type="match status" value="1"/>
</dbReference>